<feature type="chain" id="PRO_0000428728" description="Inactive peptidyl-prolyl cis-trans isomerase shutdown">
    <location>
        <begin position="1"/>
        <end position="437"/>
    </location>
</feature>
<feature type="domain" description="PPIase FKBP-type" evidence="2">
    <location>
        <begin position="92"/>
        <end position="178"/>
    </location>
</feature>
<feature type="repeat" description="TPR 1">
    <location>
        <begin position="209"/>
        <end position="242"/>
    </location>
</feature>
<feature type="repeat" description="TPR 2">
    <location>
        <begin position="258"/>
        <end position="294"/>
    </location>
</feature>
<feature type="repeat" description="TPR 3">
    <location>
        <begin position="295"/>
        <end position="327"/>
    </location>
</feature>
<comment type="function">
    <text evidence="1">Co-chaperone required during oogenesis to repress transposable elements and prevent their mobilization, which is essential for the germline integrity. Acts via the piRNA metabolic process, which mediates the repression of transposable elements during meiosis by forming complexes composed of piRNAs and Piwi proteins and govern the methylation and subsequent repression of transposons. Acts as a co-chaperone via its interaction with Hsp83/HSP90 and is required for the biogenesis of all three piRNA major populations (By similarity).</text>
</comment>
<comment type="subunit">
    <text evidence="3">Interacts with Hsp83.</text>
</comment>
<comment type="subcellular location">
    <subcellularLocation>
        <location evidence="1">Cytoplasm</location>
    </subcellularLocation>
</comment>
<comment type="similarity">
    <text evidence="4">Belongs to the FKBP6 family.</text>
</comment>
<comment type="caution">
    <text evidence="4">Although it contains a PPIase FKBP-type domain, does not show peptidyl-prolyl cis-trans isomerase activity.</text>
</comment>
<organism>
    <name type="scientific">Bombyx mori</name>
    <name type="common">Silk moth</name>
    <dbReference type="NCBI Taxonomy" id="7091"/>
    <lineage>
        <taxon>Eukaryota</taxon>
        <taxon>Metazoa</taxon>
        <taxon>Ecdysozoa</taxon>
        <taxon>Arthropoda</taxon>
        <taxon>Hexapoda</taxon>
        <taxon>Insecta</taxon>
        <taxon>Pterygota</taxon>
        <taxon>Neoptera</taxon>
        <taxon>Endopterygota</taxon>
        <taxon>Lepidoptera</taxon>
        <taxon>Glossata</taxon>
        <taxon>Ditrysia</taxon>
        <taxon>Bombycoidea</taxon>
        <taxon>Bombycidae</taxon>
        <taxon>Bombycinae</taxon>
        <taxon>Bombyx</taxon>
    </lineage>
</organism>
<name>FKBP6_BOMMO</name>
<keyword id="KW-0963">Cytoplasm</keyword>
<keyword id="KW-0221">Differentiation</keyword>
<keyword id="KW-0469">Meiosis</keyword>
<keyword id="KW-0896">Oogenesis</keyword>
<keyword id="KW-1185">Reference proteome</keyword>
<keyword id="KW-0677">Repeat</keyword>
<keyword id="KW-0943">RNA-mediated gene silencing</keyword>
<keyword id="KW-0802">TPR repeat</keyword>
<accession>H9IWW7</accession>
<proteinExistence type="evidence at protein level"/>
<protein>
    <recommendedName>
        <fullName>Inactive peptidyl-prolyl cis-trans isomerase shutdown</fullName>
    </recommendedName>
</protein>
<reference key="1">
    <citation type="journal article" date="2008" name="Insect Biochem. Mol. Biol.">
        <title>The genome of a lepidopteran model insect, the silkworm Bombyx mori.</title>
        <authorList>
            <consortium name="International Silkworm Genome Consortium"/>
        </authorList>
    </citation>
    <scope>NUCLEOTIDE SEQUENCE [LARGE SCALE GENOMIC DNA]</scope>
    <source>
        <strain>p50T</strain>
    </source>
</reference>
<reference key="2">
    <citation type="journal article" date="2012" name="Mol. Cell">
        <title>A role for Fkbp6 and the chaperone machinery in piRNA amplification and transposon silencing.</title>
        <authorList>
            <person name="Xiol J."/>
            <person name="Cora E."/>
            <person name="Koglgruber R."/>
            <person name="Chuma S."/>
            <person name="Subramanian S."/>
            <person name="Hosokawa M."/>
            <person name="Reuter M."/>
            <person name="Yang Z."/>
            <person name="Berninger P."/>
            <person name="Palencia A."/>
            <person name="Benes V."/>
            <person name="Penninger J."/>
            <person name="Sachidanandam R."/>
            <person name="Pillai R.S."/>
        </authorList>
    </citation>
    <scope>INTERACTION WITH HSP83</scope>
</reference>
<gene>
    <name type="primary">shu</name>
</gene>
<evidence type="ECO:0000250" key="1"/>
<evidence type="ECO:0000255" key="2">
    <source>
        <dbReference type="PROSITE-ProRule" id="PRU00277"/>
    </source>
</evidence>
<evidence type="ECO:0000269" key="3">
    <source>
    </source>
</evidence>
<evidence type="ECO:0000305" key="4"/>
<sequence>MEFQIDVDFQNRKTEMFINGDDDLFPEMGDEDDSDGEDTLRNIEETTKKMMLASPDYLSFEELGANMIDCMSTGDVKMLIIEEGKGPLVPVDSEVTIHYAAYWEKAVIPFDSTLTMNMGAPKRLRLGTGKIIPGLEIGLTMVKGPQARLNLLVQPAAAWGPRGVPPRIRPEPALFVIVLYDVKDNYAATRFNDLPMAEQTKYEVTLRTVNALRADAKELYKKKKYVKAIKNYQQAISVLRLSRPGTADEELDIKNNKVNAYLNLAVCYYKTNKPKHVLNMCECLDRLIDTEKHCKALYYYGKAHEMLGKTEMAIKYYKKALKLEPKNKEIGKILADLDTKTKDFAVNEKAMWLKAFNVEVPATNAVYDVDATFQSDVLDMCQSLAGRSEFAKFDLPVGLTKNEVDCIKGIVSDFGCLSVDVSGEGRNKKVCIVKKIV</sequence>
<dbReference type="SMR" id="H9IWW7"/>
<dbReference type="FunCoup" id="H9IWW7">
    <property type="interactions" value="88"/>
</dbReference>
<dbReference type="STRING" id="7091.H9IWW7"/>
<dbReference type="PaxDb" id="7091-BGIBMGA001750-TA"/>
<dbReference type="eggNOG" id="KOG0543">
    <property type="taxonomic scope" value="Eukaryota"/>
</dbReference>
<dbReference type="HOGENOM" id="CLU_047759_0_0_1"/>
<dbReference type="InParanoid" id="H9IWW7"/>
<dbReference type="OMA" id="KHEIAIF"/>
<dbReference type="Proteomes" id="UP000005204">
    <property type="component" value="Unassembled WGS sequence"/>
</dbReference>
<dbReference type="GO" id="GO:0005737">
    <property type="term" value="C:cytoplasm"/>
    <property type="evidence" value="ECO:0007669"/>
    <property type="project" value="UniProtKB-SubCell"/>
</dbReference>
<dbReference type="GO" id="GO:0051879">
    <property type="term" value="F:Hsp90 protein binding"/>
    <property type="evidence" value="ECO:0000353"/>
    <property type="project" value="UniProtKB"/>
</dbReference>
<dbReference type="GO" id="GO:0003755">
    <property type="term" value="F:peptidyl-prolyl cis-trans isomerase activity"/>
    <property type="evidence" value="ECO:0007669"/>
    <property type="project" value="InterPro"/>
</dbReference>
<dbReference type="GO" id="GO:0051321">
    <property type="term" value="P:meiotic cell cycle"/>
    <property type="evidence" value="ECO:0007669"/>
    <property type="project" value="UniProtKB-KW"/>
</dbReference>
<dbReference type="GO" id="GO:0048477">
    <property type="term" value="P:oogenesis"/>
    <property type="evidence" value="ECO:0007669"/>
    <property type="project" value="UniProtKB-KW"/>
</dbReference>
<dbReference type="GO" id="GO:0034587">
    <property type="term" value="P:piRNA processing"/>
    <property type="evidence" value="ECO:0007669"/>
    <property type="project" value="TreeGrafter"/>
</dbReference>
<dbReference type="GO" id="GO:0007283">
    <property type="term" value="P:spermatogenesis"/>
    <property type="evidence" value="ECO:0007669"/>
    <property type="project" value="TreeGrafter"/>
</dbReference>
<dbReference type="FunFam" id="1.25.40.10:FF:001397">
    <property type="entry name" value="Peptidylprolyl isomerase"/>
    <property type="match status" value="1"/>
</dbReference>
<dbReference type="Gene3D" id="3.10.50.40">
    <property type="match status" value="1"/>
</dbReference>
<dbReference type="Gene3D" id="1.25.40.10">
    <property type="entry name" value="Tetratricopeptide repeat domain"/>
    <property type="match status" value="1"/>
</dbReference>
<dbReference type="InterPro" id="IPR042282">
    <property type="entry name" value="FKBP6/shu"/>
</dbReference>
<dbReference type="InterPro" id="IPR046357">
    <property type="entry name" value="PPIase_dom_sf"/>
</dbReference>
<dbReference type="InterPro" id="IPR001179">
    <property type="entry name" value="PPIase_FKBP_dom"/>
</dbReference>
<dbReference type="InterPro" id="IPR011990">
    <property type="entry name" value="TPR-like_helical_dom_sf"/>
</dbReference>
<dbReference type="InterPro" id="IPR013105">
    <property type="entry name" value="TPR_2"/>
</dbReference>
<dbReference type="InterPro" id="IPR019734">
    <property type="entry name" value="TPR_rpt"/>
</dbReference>
<dbReference type="PANTHER" id="PTHR46674">
    <property type="entry name" value="INACTIVE PEPTIDYL-PROLYL CIS-TRANS ISOMERASE FKBP6"/>
    <property type="match status" value="1"/>
</dbReference>
<dbReference type="PANTHER" id="PTHR46674:SF1">
    <property type="entry name" value="INACTIVE PEPTIDYL-PROLYL CIS-TRANS ISOMERASE FKBP6"/>
    <property type="match status" value="1"/>
</dbReference>
<dbReference type="Pfam" id="PF00254">
    <property type="entry name" value="FKBP_C"/>
    <property type="match status" value="1"/>
</dbReference>
<dbReference type="Pfam" id="PF07719">
    <property type="entry name" value="TPR_2"/>
    <property type="match status" value="1"/>
</dbReference>
<dbReference type="SMART" id="SM00028">
    <property type="entry name" value="TPR"/>
    <property type="match status" value="3"/>
</dbReference>
<dbReference type="SUPFAM" id="SSF54534">
    <property type="entry name" value="FKBP-like"/>
    <property type="match status" value="1"/>
</dbReference>
<dbReference type="SUPFAM" id="SSF48452">
    <property type="entry name" value="TPR-like"/>
    <property type="match status" value="1"/>
</dbReference>
<dbReference type="PROSITE" id="PS50059">
    <property type="entry name" value="FKBP_PPIASE"/>
    <property type="match status" value="1"/>
</dbReference>
<dbReference type="PROSITE" id="PS50005">
    <property type="entry name" value="TPR"/>
    <property type="match status" value="2"/>
</dbReference>
<dbReference type="PROSITE" id="PS50293">
    <property type="entry name" value="TPR_REGION"/>
    <property type="match status" value="1"/>
</dbReference>